<protein>
    <recommendedName>
        <fullName evidence="1">Phosphoribosyl-AMP cyclohydrolase 2</fullName>
        <shortName evidence="1">PRA-CH 2</shortName>
        <ecNumber evidence="1">3.5.4.19</ecNumber>
    </recommendedName>
</protein>
<keyword id="KW-0028">Amino-acid biosynthesis</keyword>
<keyword id="KW-0963">Cytoplasm</keyword>
<keyword id="KW-0368">Histidine biosynthesis</keyword>
<keyword id="KW-0378">Hydrolase</keyword>
<keyword id="KW-0460">Magnesium</keyword>
<keyword id="KW-0479">Metal-binding</keyword>
<keyword id="KW-0862">Zinc</keyword>
<name>HIS32_PSEF5</name>
<feature type="chain" id="PRO_0000229835" description="Phosphoribosyl-AMP cyclohydrolase 2">
    <location>
        <begin position="1"/>
        <end position="147"/>
    </location>
</feature>
<feature type="binding site" evidence="1">
    <location>
        <position position="99"/>
    </location>
    <ligand>
        <name>Mg(2+)</name>
        <dbReference type="ChEBI" id="CHEBI:18420"/>
    </ligand>
</feature>
<feature type="binding site" evidence="1">
    <location>
        <position position="100"/>
    </location>
    <ligand>
        <name>Zn(2+)</name>
        <dbReference type="ChEBI" id="CHEBI:29105"/>
        <note>ligand shared between dimeric partners</note>
    </ligand>
</feature>
<feature type="binding site" evidence="1">
    <location>
        <position position="101"/>
    </location>
    <ligand>
        <name>Mg(2+)</name>
        <dbReference type="ChEBI" id="CHEBI:18420"/>
    </ligand>
</feature>
<feature type="binding site" evidence="1">
    <location>
        <position position="103"/>
    </location>
    <ligand>
        <name>Mg(2+)</name>
        <dbReference type="ChEBI" id="CHEBI:18420"/>
    </ligand>
</feature>
<feature type="binding site" evidence="1">
    <location>
        <position position="116"/>
    </location>
    <ligand>
        <name>Zn(2+)</name>
        <dbReference type="ChEBI" id="CHEBI:29105"/>
        <note>ligand shared between dimeric partners</note>
    </ligand>
</feature>
<feature type="binding site" evidence="1">
    <location>
        <position position="123"/>
    </location>
    <ligand>
        <name>Zn(2+)</name>
        <dbReference type="ChEBI" id="CHEBI:29105"/>
        <note>ligand shared between dimeric partners</note>
    </ligand>
</feature>
<organism>
    <name type="scientific">Pseudomonas fluorescens (strain ATCC BAA-477 / NRRL B-23932 / Pf-5)</name>
    <dbReference type="NCBI Taxonomy" id="220664"/>
    <lineage>
        <taxon>Bacteria</taxon>
        <taxon>Pseudomonadati</taxon>
        <taxon>Pseudomonadota</taxon>
        <taxon>Gammaproteobacteria</taxon>
        <taxon>Pseudomonadales</taxon>
        <taxon>Pseudomonadaceae</taxon>
        <taxon>Pseudomonas</taxon>
    </lineage>
</organism>
<reference key="1">
    <citation type="journal article" date="2005" name="Nat. Biotechnol.">
        <title>Complete genome sequence of the plant commensal Pseudomonas fluorescens Pf-5.</title>
        <authorList>
            <person name="Paulsen I.T."/>
            <person name="Press C.M."/>
            <person name="Ravel J."/>
            <person name="Kobayashi D.Y."/>
            <person name="Myers G.S.A."/>
            <person name="Mavrodi D.V."/>
            <person name="DeBoy R.T."/>
            <person name="Seshadri R."/>
            <person name="Ren Q."/>
            <person name="Madupu R."/>
            <person name="Dodson R.J."/>
            <person name="Durkin A.S."/>
            <person name="Brinkac L.M."/>
            <person name="Daugherty S.C."/>
            <person name="Sullivan S.A."/>
            <person name="Rosovitz M.J."/>
            <person name="Gwinn M.L."/>
            <person name="Zhou L."/>
            <person name="Schneider D.J."/>
            <person name="Cartinhour S.W."/>
            <person name="Nelson W.C."/>
            <person name="Weidman J."/>
            <person name="Watkins K."/>
            <person name="Tran K."/>
            <person name="Khouri H."/>
            <person name="Pierson E.A."/>
            <person name="Pierson L.S. III"/>
            <person name="Thomashow L.S."/>
            <person name="Loper J.E."/>
        </authorList>
    </citation>
    <scope>NUCLEOTIDE SEQUENCE [LARGE SCALE GENOMIC DNA]</scope>
    <source>
        <strain>ATCC BAA-477 / NRRL B-23932 / Pf-5</strain>
    </source>
</reference>
<dbReference type="EC" id="3.5.4.19" evidence="1"/>
<dbReference type="EMBL" id="CP000076">
    <property type="protein sequence ID" value="AAY95369.1"/>
    <property type="molecule type" value="Genomic_DNA"/>
</dbReference>
<dbReference type="RefSeq" id="WP_011064346.1">
    <property type="nucleotide sequence ID" value="NC_004129.6"/>
</dbReference>
<dbReference type="SMR" id="Q4K3E4"/>
<dbReference type="STRING" id="220664.PFL_6181"/>
<dbReference type="KEGG" id="pfl:PFL_6181"/>
<dbReference type="PATRIC" id="fig|220664.5.peg.6310"/>
<dbReference type="eggNOG" id="COG0139">
    <property type="taxonomic scope" value="Bacteria"/>
</dbReference>
<dbReference type="HOGENOM" id="CLU_048577_5_2_6"/>
<dbReference type="UniPathway" id="UPA00031">
    <property type="reaction ID" value="UER00008"/>
</dbReference>
<dbReference type="Proteomes" id="UP000008540">
    <property type="component" value="Chromosome"/>
</dbReference>
<dbReference type="GO" id="GO:0005737">
    <property type="term" value="C:cytoplasm"/>
    <property type="evidence" value="ECO:0007669"/>
    <property type="project" value="UniProtKB-SubCell"/>
</dbReference>
<dbReference type="GO" id="GO:0000287">
    <property type="term" value="F:magnesium ion binding"/>
    <property type="evidence" value="ECO:0007669"/>
    <property type="project" value="UniProtKB-UniRule"/>
</dbReference>
<dbReference type="GO" id="GO:0004635">
    <property type="term" value="F:phosphoribosyl-AMP cyclohydrolase activity"/>
    <property type="evidence" value="ECO:0007669"/>
    <property type="project" value="UniProtKB-UniRule"/>
</dbReference>
<dbReference type="GO" id="GO:0008270">
    <property type="term" value="F:zinc ion binding"/>
    <property type="evidence" value="ECO:0007669"/>
    <property type="project" value="UniProtKB-UniRule"/>
</dbReference>
<dbReference type="GO" id="GO:0000105">
    <property type="term" value="P:L-histidine biosynthetic process"/>
    <property type="evidence" value="ECO:0007669"/>
    <property type="project" value="UniProtKB-UniRule"/>
</dbReference>
<dbReference type="FunFam" id="3.10.20.810:FF:000001">
    <property type="entry name" value="Histidine biosynthesis bifunctional protein HisIE"/>
    <property type="match status" value="1"/>
</dbReference>
<dbReference type="Gene3D" id="3.10.20.810">
    <property type="entry name" value="Phosphoribosyl-AMP cyclohydrolase"/>
    <property type="match status" value="1"/>
</dbReference>
<dbReference type="HAMAP" id="MF_01021">
    <property type="entry name" value="HisI"/>
    <property type="match status" value="1"/>
</dbReference>
<dbReference type="InterPro" id="IPR026660">
    <property type="entry name" value="PRA-CH"/>
</dbReference>
<dbReference type="InterPro" id="IPR002496">
    <property type="entry name" value="PRib_AMP_CycHydrolase_dom"/>
</dbReference>
<dbReference type="InterPro" id="IPR038019">
    <property type="entry name" value="PRib_AMP_CycHydrolase_sf"/>
</dbReference>
<dbReference type="NCBIfam" id="NF000768">
    <property type="entry name" value="PRK00051.1"/>
    <property type="match status" value="1"/>
</dbReference>
<dbReference type="PANTHER" id="PTHR42945">
    <property type="entry name" value="HISTIDINE BIOSYNTHESIS BIFUNCTIONAL PROTEIN"/>
    <property type="match status" value="1"/>
</dbReference>
<dbReference type="PANTHER" id="PTHR42945:SF1">
    <property type="entry name" value="HISTIDINE BIOSYNTHESIS BIFUNCTIONAL PROTEIN HIS7"/>
    <property type="match status" value="1"/>
</dbReference>
<dbReference type="Pfam" id="PF01502">
    <property type="entry name" value="PRA-CH"/>
    <property type="match status" value="1"/>
</dbReference>
<dbReference type="SUPFAM" id="SSF141734">
    <property type="entry name" value="HisI-like"/>
    <property type="match status" value="1"/>
</dbReference>
<gene>
    <name evidence="1" type="primary">hisI2</name>
    <name type="ordered locus">PFL_6181</name>
</gene>
<comment type="function">
    <text evidence="1">Catalyzes the hydrolysis of the adenine ring of phosphoribosyl-AMP.</text>
</comment>
<comment type="catalytic activity">
    <reaction evidence="1">
        <text>1-(5-phospho-beta-D-ribosyl)-5'-AMP + H2O = 1-(5-phospho-beta-D-ribosyl)-5-[(5-phospho-beta-D-ribosylamino)methylideneamino]imidazole-4-carboxamide</text>
        <dbReference type="Rhea" id="RHEA:20049"/>
        <dbReference type="ChEBI" id="CHEBI:15377"/>
        <dbReference type="ChEBI" id="CHEBI:58435"/>
        <dbReference type="ChEBI" id="CHEBI:59457"/>
        <dbReference type="EC" id="3.5.4.19"/>
    </reaction>
</comment>
<comment type="cofactor">
    <cofactor evidence="1">
        <name>Mg(2+)</name>
        <dbReference type="ChEBI" id="CHEBI:18420"/>
    </cofactor>
    <text evidence="1">Binds 1 Mg(2+) ion per subunit.</text>
</comment>
<comment type="cofactor">
    <cofactor evidence="1">
        <name>Zn(2+)</name>
        <dbReference type="ChEBI" id="CHEBI:29105"/>
    </cofactor>
    <text evidence="1">Binds 1 zinc ion per subunit.</text>
</comment>
<comment type="pathway">
    <text evidence="1">Amino-acid biosynthesis; L-histidine biosynthesis; L-histidine from 5-phospho-alpha-D-ribose 1-diphosphate: step 3/9.</text>
</comment>
<comment type="subunit">
    <text evidence="1">Homodimer.</text>
</comment>
<comment type="subcellular location">
    <subcellularLocation>
        <location evidence="1">Cytoplasm</location>
    </subcellularLocation>
</comment>
<comment type="similarity">
    <text evidence="1">Belongs to the PRA-CH family.</text>
</comment>
<accession>Q4K3E4</accession>
<proteinExistence type="inferred from homology"/>
<evidence type="ECO:0000255" key="1">
    <source>
        <dbReference type="HAMAP-Rule" id="MF_01021"/>
    </source>
</evidence>
<sequence length="147" mass="16205">MIRRPPLSLLDLEAAPLGSRWALTAVLDALPWNSDGLIAAIAQQHDSGEVLMLAWMNRQALGETLASGQACYWSRSRRCLWRKGESSGHRQRLIEARLDCDGDAVLLLVDQQGPACHTGRPNCFYNAIRDGAVEVISSPLKDSRHDS</sequence>